<comment type="function">
    <text evidence="1">Responsible for the release of ribosomes from messenger RNA at the termination of protein biosynthesis. May increase the efficiency of translation by recycling ribosomes from one round of translation to another.</text>
</comment>
<comment type="subcellular location">
    <subcellularLocation>
        <location evidence="1">Cytoplasm</location>
    </subcellularLocation>
</comment>
<comment type="similarity">
    <text evidence="1">Belongs to the RRF family.</text>
</comment>
<dbReference type="EMBL" id="FM211192">
    <property type="protein sequence ID" value="CAR71685.1"/>
    <property type="molecule type" value="Genomic_DNA"/>
</dbReference>
<dbReference type="SMR" id="B8ZRV0"/>
<dbReference type="KEGG" id="mlb:MLBr01590"/>
<dbReference type="HOGENOM" id="CLU_073981_2_0_11"/>
<dbReference type="Proteomes" id="UP000006900">
    <property type="component" value="Chromosome"/>
</dbReference>
<dbReference type="GO" id="GO:0005737">
    <property type="term" value="C:cytoplasm"/>
    <property type="evidence" value="ECO:0007669"/>
    <property type="project" value="UniProtKB-SubCell"/>
</dbReference>
<dbReference type="GO" id="GO:0043023">
    <property type="term" value="F:ribosomal large subunit binding"/>
    <property type="evidence" value="ECO:0007669"/>
    <property type="project" value="TreeGrafter"/>
</dbReference>
<dbReference type="GO" id="GO:0006415">
    <property type="term" value="P:translational termination"/>
    <property type="evidence" value="ECO:0007669"/>
    <property type="project" value="UniProtKB-UniRule"/>
</dbReference>
<dbReference type="CDD" id="cd00520">
    <property type="entry name" value="RRF"/>
    <property type="match status" value="1"/>
</dbReference>
<dbReference type="FunFam" id="1.10.132.20:FF:000001">
    <property type="entry name" value="Ribosome-recycling factor"/>
    <property type="match status" value="1"/>
</dbReference>
<dbReference type="FunFam" id="3.30.1360.40:FF:000001">
    <property type="entry name" value="Ribosome-recycling factor"/>
    <property type="match status" value="1"/>
</dbReference>
<dbReference type="Gene3D" id="3.30.1360.40">
    <property type="match status" value="1"/>
</dbReference>
<dbReference type="Gene3D" id="1.10.132.20">
    <property type="entry name" value="Ribosome-recycling factor"/>
    <property type="match status" value="1"/>
</dbReference>
<dbReference type="HAMAP" id="MF_00040">
    <property type="entry name" value="RRF"/>
    <property type="match status" value="1"/>
</dbReference>
<dbReference type="InterPro" id="IPR002661">
    <property type="entry name" value="Ribosome_recyc_fac"/>
</dbReference>
<dbReference type="InterPro" id="IPR023584">
    <property type="entry name" value="Ribosome_recyc_fac_dom"/>
</dbReference>
<dbReference type="InterPro" id="IPR036191">
    <property type="entry name" value="RRF_sf"/>
</dbReference>
<dbReference type="NCBIfam" id="TIGR00496">
    <property type="entry name" value="frr"/>
    <property type="match status" value="1"/>
</dbReference>
<dbReference type="PANTHER" id="PTHR20982:SF3">
    <property type="entry name" value="MITOCHONDRIAL RIBOSOME RECYCLING FACTOR PSEUDO 1"/>
    <property type="match status" value="1"/>
</dbReference>
<dbReference type="PANTHER" id="PTHR20982">
    <property type="entry name" value="RIBOSOME RECYCLING FACTOR"/>
    <property type="match status" value="1"/>
</dbReference>
<dbReference type="Pfam" id="PF01765">
    <property type="entry name" value="RRF"/>
    <property type="match status" value="1"/>
</dbReference>
<dbReference type="SUPFAM" id="SSF55194">
    <property type="entry name" value="Ribosome recycling factor, RRF"/>
    <property type="match status" value="1"/>
</dbReference>
<accession>B8ZRV0</accession>
<evidence type="ECO:0000255" key="1">
    <source>
        <dbReference type="HAMAP-Rule" id="MF_00040"/>
    </source>
</evidence>
<organism>
    <name type="scientific">Mycobacterium leprae (strain Br4923)</name>
    <dbReference type="NCBI Taxonomy" id="561304"/>
    <lineage>
        <taxon>Bacteria</taxon>
        <taxon>Bacillati</taxon>
        <taxon>Actinomycetota</taxon>
        <taxon>Actinomycetes</taxon>
        <taxon>Mycobacteriales</taxon>
        <taxon>Mycobacteriaceae</taxon>
        <taxon>Mycobacterium</taxon>
    </lineage>
</organism>
<sequence length="185" mass="20892">MIDEALFDAEEKMEKAVSVAREDLSMIRTGRANPGMFSRLVIDYYGSATPITQLASINVPEARLVVIKPYDAIQLHAIETAIRNSDLGVNPSNDGTLIRVAVPQLTEERRRELVKQAKCKGEDAKVSVRNIRRKVMEELHRIRKDGEAGEDEVSRAEKDLDKTTHQYVIQIDELVKHKEGELLEV</sequence>
<name>RRF_MYCLB</name>
<proteinExistence type="inferred from homology"/>
<protein>
    <recommendedName>
        <fullName evidence="1">Ribosome-recycling factor</fullName>
        <shortName evidence="1">RRF</shortName>
    </recommendedName>
    <alternativeName>
        <fullName evidence="1">Ribosome-releasing factor</fullName>
    </alternativeName>
</protein>
<feature type="chain" id="PRO_1000194942" description="Ribosome-recycling factor">
    <location>
        <begin position="1"/>
        <end position="185"/>
    </location>
</feature>
<gene>
    <name evidence="1" type="primary">frr</name>
    <name type="ordered locus">MLBr01590</name>
</gene>
<reference key="1">
    <citation type="journal article" date="2009" name="Nat. Genet.">
        <title>Comparative genomic and phylogeographic analysis of Mycobacterium leprae.</title>
        <authorList>
            <person name="Monot M."/>
            <person name="Honore N."/>
            <person name="Garnier T."/>
            <person name="Zidane N."/>
            <person name="Sherafi D."/>
            <person name="Paniz-Mondolfi A."/>
            <person name="Matsuoka M."/>
            <person name="Taylor G.M."/>
            <person name="Donoghue H.D."/>
            <person name="Bouwman A."/>
            <person name="Mays S."/>
            <person name="Watson C."/>
            <person name="Lockwood D."/>
            <person name="Khamispour A."/>
            <person name="Dowlati Y."/>
            <person name="Jianping S."/>
            <person name="Rea T.H."/>
            <person name="Vera-Cabrera L."/>
            <person name="Stefani M.M."/>
            <person name="Banu S."/>
            <person name="Macdonald M."/>
            <person name="Sapkota B.R."/>
            <person name="Spencer J.S."/>
            <person name="Thomas J."/>
            <person name="Harshman K."/>
            <person name="Singh P."/>
            <person name="Busso P."/>
            <person name="Gattiker A."/>
            <person name="Rougemont J."/>
            <person name="Brennan P.J."/>
            <person name="Cole S.T."/>
        </authorList>
    </citation>
    <scope>NUCLEOTIDE SEQUENCE [LARGE SCALE GENOMIC DNA]</scope>
    <source>
        <strain>Br4923</strain>
    </source>
</reference>
<keyword id="KW-0963">Cytoplasm</keyword>
<keyword id="KW-0648">Protein biosynthesis</keyword>